<name>IDH2_ARATH</name>
<organism>
    <name type="scientific">Arabidopsis thaliana</name>
    <name type="common">Mouse-ear cress</name>
    <dbReference type="NCBI Taxonomy" id="3702"/>
    <lineage>
        <taxon>Eukaryota</taxon>
        <taxon>Viridiplantae</taxon>
        <taxon>Streptophyta</taxon>
        <taxon>Embryophyta</taxon>
        <taxon>Tracheophyta</taxon>
        <taxon>Spermatophyta</taxon>
        <taxon>Magnoliopsida</taxon>
        <taxon>eudicotyledons</taxon>
        <taxon>Gunneridae</taxon>
        <taxon>Pentapetalae</taxon>
        <taxon>rosids</taxon>
        <taxon>malvids</taxon>
        <taxon>Brassicales</taxon>
        <taxon>Brassicaceae</taxon>
        <taxon>Camelineae</taxon>
        <taxon>Arabidopsis</taxon>
    </lineage>
</organism>
<sequence length="367" mass="39590">MSRQSFSLLKNLRSIASGSKIQTRSVTYMPRPGDGKPRPVTLIPGDGVGPLVTNAVQQVMEAMHAPVYFEPFEVHGDMKSLPEGLLESIKKNKVCLKGGLKTPVGGGVSSLNVNLRKELDLFASLVNCFNLPGLASRHENVDIVVIRENTEGEYAGLEHEVVPGVVESLKVITKFCSERIAKYAFEYAYLNNRKKVTAVHKANIMKLADGLFLESCQEVAKKYPSIAYNEIIVDNCCMQLVARPEQFDVMVTPNLYGNLVANTAAGIAGGTGVMPGGNVGAEYAVFEQGASAGNVGKDTTEEQKNANPVALLLSSAMMLRHLQFPSFADRLETAVKRVIAEGNCRTEDLGGNSTTQEVVDAVIANLD</sequence>
<gene>
    <name type="primary">IDH2</name>
    <name type="ordered locus">At2g17130</name>
    <name type="ORF">F6P23.14</name>
</gene>
<evidence type="ECO:0000255" key="1"/>
<evidence type="ECO:0000269" key="2">
    <source>
    </source>
</evidence>
<evidence type="ECO:0000269" key="3">
    <source>
    </source>
</evidence>
<evidence type="ECO:0000269" key="4">
    <source ref="6"/>
</evidence>
<evidence type="ECO:0000305" key="5"/>
<feature type="transit peptide" description="Mitochondrion" evidence="1">
    <location>
        <begin position="1"/>
        <end position="25"/>
    </location>
</feature>
<feature type="chain" id="PRO_0000271288" description="Isocitrate dehydrogenase [NAD] regulatory subunit 2, mitochondrial">
    <location>
        <begin position="26"/>
        <end position="367"/>
    </location>
</feature>
<feature type="splice variant" id="VSP_027467" description="In isoform 2." evidence="5">
    <location>
        <begin position="171"/>
        <end position="174"/>
    </location>
</feature>
<feature type="sequence conflict" description="In Ref. 1; AAC49965." evidence="5" ref="1">
    <original>F</original>
    <variation>S</variation>
    <location>
        <position position="6"/>
    </location>
</feature>
<feature type="sequence conflict" description="In Ref. 1; AAC49965." evidence="5" ref="1">
    <original>G</original>
    <variation>R</variation>
    <location>
        <position position="18"/>
    </location>
</feature>
<feature type="sequence conflict" description="In Ref. 1; AAC49965." evidence="5" ref="1">
    <original>T</original>
    <variation>S</variation>
    <location>
        <position position="271"/>
    </location>
</feature>
<protein>
    <recommendedName>
        <fullName>Isocitrate dehydrogenase [NAD] regulatory subunit 2, mitochondrial</fullName>
    </recommendedName>
    <alternativeName>
        <fullName>IDH-II</fullName>
    </alternativeName>
    <alternativeName>
        <fullName>Isocitric dehydrogenase 2</fullName>
    </alternativeName>
    <alternativeName>
        <fullName>NAD(+)-specific ICDH 2</fullName>
    </alternativeName>
</protein>
<proteinExistence type="evidence at protein level"/>
<reference key="1">
    <citation type="journal article" date="1998" name="Plant Mol. Biol.">
        <title>NAD(+)-dependent isocitrate dehydrogenase from Arabidopsis thaliana. Characterization of two closely related subunits.</title>
        <authorList>
            <person name="Behal R.H."/>
            <person name="Oliver D.J."/>
        </authorList>
    </citation>
    <scope>NUCLEOTIDE SEQUENCE [MRNA]</scope>
    <source>
        <strain>cv. Columbia</strain>
    </source>
</reference>
<reference key="2">
    <citation type="journal article" date="1999" name="Nature">
        <title>Sequence and analysis of chromosome 2 of the plant Arabidopsis thaliana.</title>
        <authorList>
            <person name="Lin X."/>
            <person name="Kaul S."/>
            <person name="Rounsley S.D."/>
            <person name="Shea T.P."/>
            <person name="Benito M.-I."/>
            <person name="Town C.D."/>
            <person name="Fujii C.Y."/>
            <person name="Mason T.M."/>
            <person name="Bowman C.L."/>
            <person name="Barnstead M.E."/>
            <person name="Feldblyum T.V."/>
            <person name="Buell C.R."/>
            <person name="Ketchum K.A."/>
            <person name="Lee J.J."/>
            <person name="Ronning C.M."/>
            <person name="Koo H.L."/>
            <person name="Moffat K.S."/>
            <person name="Cronin L.A."/>
            <person name="Shen M."/>
            <person name="Pai G."/>
            <person name="Van Aken S."/>
            <person name="Umayam L."/>
            <person name="Tallon L.J."/>
            <person name="Gill J.E."/>
            <person name="Adams M.D."/>
            <person name="Carrera A.J."/>
            <person name="Creasy T.H."/>
            <person name="Goodman H.M."/>
            <person name="Somerville C.R."/>
            <person name="Copenhaver G.P."/>
            <person name="Preuss D."/>
            <person name="Nierman W.C."/>
            <person name="White O."/>
            <person name="Eisen J.A."/>
            <person name="Salzberg S.L."/>
            <person name="Fraser C.M."/>
            <person name="Venter J.C."/>
        </authorList>
    </citation>
    <scope>NUCLEOTIDE SEQUENCE [LARGE SCALE GENOMIC DNA]</scope>
    <source>
        <strain>cv. Columbia</strain>
    </source>
</reference>
<reference key="3">
    <citation type="journal article" date="2017" name="Plant J.">
        <title>Araport11: a complete reannotation of the Arabidopsis thaliana reference genome.</title>
        <authorList>
            <person name="Cheng C.Y."/>
            <person name="Krishnakumar V."/>
            <person name="Chan A.P."/>
            <person name="Thibaud-Nissen F."/>
            <person name="Schobel S."/>
            <person name="Town C.D."/>
        </authorList>
    </citation>
    <scope>GENOME REANNOTATION</scope>
    <source>
        <strain>cv. Columbia</strain>
    </source>
</reference>
<reference key="4">
    <citation type="submission" date="2006-07" db="EMBL/GenBank/DDBJ databases">
        <title>Large-scale analysis of RIKEN Arabidopsis full-length (RAFL) cDNAs.</title>
        <authorList>
            <person name="Totoki Y."/>
            <person name="Seki M."/>
            <person name="Ishida J."/>
            <person name="Nakajima M."/>
            <person name="Enju A."/>
            <person name="Kamiya A."/>
            <person name="Narusaka M."/>
            <person name="Shin-i T."/>
            <person name="Nakagawa M."/>
            <person name="Sakamoto N."/>
            <person name="Oishi K."/>
            <person name="Kohara Y."/>
            <person name="Kobayashi M."/>
            <person name="Toyoda A."/>
            <person name="Sakaki Y."/>
            <person name="Sakurai T."/>
            <person name="Iida K."/>
            <person name="Akiyama K."/>
            <person name="Satou M."/>
            <person name="Toyoda T."/>
            <person name="Konagaya A."/>
            <person name="Carninci P."/>
            <person name="Kawai J."/>
            <person name="Hayashizaki Y."/>
            <person name="Shinozaki K."/>
        </authorList>
    </citation>
    <scope>NUCLEOTIDE SEQUENCE [LARGE SCALE MRNA]</scope>
    <source>
        <strain>cv. Columbia</strain>
    </source>
</reference>
<reference key="5">
    <citation type="journal article" date="2004" name="Plant Cell">
        <title>Experimental analysis of the Arabidopsis mitochondrial proteome highlights signaling and regulatory components, provides assessment of targeting prediction programs, and indicates plant-specific mitochondrial proteins.</title>
        <authorList>
            <person name="Heazlewood J.L."/>
            <person name="Tonti-Filippini J.S."/>
            <person name="Gout A.M."/>
            <person name="Day D.A."/>
            <person name="Whelan J."/>
            <person name="Millar A.H."/>
        </authorList>
    </citation>
    <scope>IDENTIFICATION BY MASS SPECTROMETRY</scope>
    <scope>SUBCELLULAR LOCATION [LARGE SCALE ANALYSIS]</scope>
    <source>
        <strain>cv. Landsberg erecta</strain>
    </source>
</reference>
<reference key="6">
    <citation type="journal article" date="2004" name="Plant Sci.">
        <title>Characterization of a mutation in the IDH-II subunit of the NAD(+)-dependent isocitrate dehydrogenase from Arabidopsis thaliana.</title>
        <authorList>
            <person name="Lin M."/>
            <person name="Behal R.H."/>
            <person name="Oliver D.J."/>
        </authorList>
        <dbReference type="AGRICOLA" id="IND43633651"/>
    </citation>
    <scope>GENE FAMILY</scope>
    <scope>FUNCTION</scope>
    <scope>TISSUE SPECIFICITY</scope>
</reference>
<reference key="7">
    <citation type="journal article" date="2006" name="Plant Cell Physiol.">
        <title>Expression analysis of Arabidopsis thaliana NAD-dependent isocitrate dehydrogenase genes shows the presence of a functional subunit that is mainly expressed in the pollen and absent from vegetative organs.</title>
        <authorList>
            <person name="Lemaitre T."/>
            <person name="Hodges M."/>
        </authorList>
    </citation>
    <scope>TISSUE SPECIFICITY</scope>
</reference>
<comment type="function">
    <text evidence="4">Performs an essential role in the oxidative function of the citric acid cycle.</text>
</comment>
<comment type="subunit">
    <text>Heterooligomer of catalytic and regulatory subunits.</text>
</comment>
<comment type="subcellular location">
    <subcellularLocation>
        <location evidence="2">Mitochondrion</location>
    </subcellularLocation>
</comment>
<comment type="alternative products">
    <event type="alternative splicing"/>
    <isoform>
        <id>P93032-1</id>
        <name>1</name>
        <sequence type="displayed"/>
    </isoform>
    <isoform>
        <id>P93032-2</id>
        <name>2</name>
        <sequence type="described" ref="VSP_027467"/>
    </isoform>
</comment>
<comment type="tissue specificity">
    <text evidence="3 4">Ubiquitous. Predominantly expressed in roots, stems and leaves.</text>
</comment>
<comment type="miscellaneous">
    <molecule>Isoform 2</molecule>
    <text evidence="5">May be due to a competing acceptor splice site.</text>
</comment>
<comment type="similarity">
    <text evidence="5">Belongs to the isocitrate and isopropylmalate dehydrogenases family.</text>
</comment>
<keyword id="KW-0025">Alternative splicing</keyword>
<keyword id="KW-0460">Magnesium</keyword>
<keyword id="KW-0464">Manganese</keyword>
<keyword id="KW-0479">Metal-binding</keyword>
<keyword id="KW-0496">Mitochondrion</keyword>
<keyword id="KW-0520">NAD</keyword>
<keyword id="KW-0560">Oxidoreductase</keyword>
<keyword id="KW-1185">Reference proteome</keyword>
<keyword id="KW-0809">Transit peptide</keyword>
<keyword id="KW-0816">Tricarboxylic acid cycle</keyword>
<accession>P93032</accession>
<accession>Q7XJT6</accession>
<dbReference type="EMBL" id="U81994">
    <property type="protein sequence ID" value="AAC49965.1"/>
    <property type="molecule type" value="mRNA"/>
</dbReference>
<dbReference type="EMBL" id="CP002685">
    <property type="protein sequence ID" value="AEC06588.1"/>
    <property type="molecule type" value="Genomic_DNA"/>
</dbReference>
<dbReference type="EMBL" id="CP002685">
    <property type="protein sequence ID" value="AEC06589.1"/>
    <property type="molecule type" value="Genomic_DNA"/>
</dbReference>
<dbReference type="EMBL" id="AK228337">
    <property type="protein sequence ID" value="BAF00277.1"/>
    <property type="molecule type" value="mRNA"/>
</dbReference>
<dbReference type="PIR" id="D84548">
    <property type="entry name" value="D84548"/>
</dbReference>
<dbReference type="RefSeq" id="NP_179304.1">
    <molecule id="P93032-1"/>
    <property type="nucleotide sequence ID" value="NM_127267.3"/>
</dbReference>
<dbReference type="RefSeq" id="NP_849963.1">
    <molecule id="P93032-2"/>
    <property type="nucleotide sequence ID" value="NM_179632.2"/>
</dbReference>
<dbReference type="SMR" id="P93032"/>
<dbReference type="BioGRID" id="1575">
    <property type="interactions" value="3"/>
</dbReference>
<dbReference type="FunCoup" id="P93032">
    <property type="interactions" value="3095"/>
</dbReference>
<dbReference type="STRING" id="3702.P93032"/>
<dbReference type="PaxDb" id="3702-AT2G17130.1"/>
<dbReference type="ProteomicsDB" id="248615">
    <molecule id="P93032-1"/>
</dbReference>
<dbReference type="EnsemblPlants" id="AT2G17130.1">
    <molecule id="P93032-1"/>
    <property type="protein sequence ID" value="AT2G17130.1"/>
    <property type="gene ID" value="AT2G17130"/>
</dbReference>
<dbReference type="EnsemblPlants" id="AT2G17130.2">
    <molecule id="P93032-2"/>
    <property type="protein sequence ID" value="AT2G17130.2"/>
    <property type="gene ID" value="AT2G17130"/>
</dbReference>
<dbReference type="GeneID" id="816218"/>
<dbReference type="Gramene" id="AT2G17130.1">
    <molecule id="P93032-1"/>
    <property type="protein sequence ID" value="AT2G17130.1"/>
    <property type="gene ID" value="AT2G17130"/>
</dbReference>
<dbReference type="Gramene" id="AT2G17130.2">
    <molecule id="P93032-2"/>
    <property type="protein sequence ID" value="AT2G17130.2"/>
    <property type="gene ID" value="AT2G17130"/>
</dbReference>
<dbReference type="KEGG" id="ath:AT2G17130"/>
<dbReference type="Araport" id="AT2G17130"/>
<dbReference type="TAIR" id="AT2G17130">
    <property type="gene designation" value="IDH2"/>
</dbReference>
<dbReference type="eggNOG" id="KOG0784">
    <property type="taxonomic scope" value="Eukaryota"/>
</dbReference>
<dbReference type="HOGENOM" id="CLU_031953_0_1_1"/>
<dbReference type="InParanoid" id="P93032"/>
<dbReference type="OMA" id="FYHRIPP"/>
<dbReference type="OrthoDB" id="10261637at2759"/>
<dbReference type="PhylomeDB" id="P93032"/>
<dbReference type="BioCyc" id="MetaCyc:AT2G17130-MONOMER"/>
<dbReference type="BRENDA" id="1.1.1.41">
    <property type="organism ID" value="399"/>
</dbReference>
<dbReference type="PRO" id="PR:P93032"/>
<dbReference type="Proteomes" id="UP000006548">
    <property type="component" value="Chromosome 2"/>
</dbReference>
<dbReference type="ExpressionAtlas" id="P93032">
    <property type="expression patterns" value="baseline and differential"/>
</dbReference>
<dbReference type="GO" id="GO:0005739">
    <property type="term" value="C:mitochondrion"/>
    <property type="evidence" value="ECO:0007005"/>
    <property type="project" value="TAIR"/>
</dbReference>
<dbReference type="GO" id="GO:0004449">
    <property type="term" value="F:isocitrate dehydrogenase (NAD+) activity"/>
    <property type="evidence" value="ECO:0007669"/>
    <property type="project" value="UniProtKB-EC"/>
</dbReference>
<dbReference type="GO" id="GO:0046872">
    <property type="term" value="F:metal ion binding"/>
    <property type="evidence" value="ECO:0007669"/>
    <property type="project" value="UniProtKB-KW"/>
</dbReference>
<dbReference type="GO" id="GO:0006099">
    <property type="term" value="P:tricarboxylic acid cycle"/>
    <property type="evidence" value="ECO:0000304"/>
    <property type="project" value="TAIR"/>
</dbReference>
<dbReference type="FunFam" id="3.40.718.10:FF:000009">
    <property type="entry name" value="Isocitrate dehydrogenase [NAD] regulatory subunit 1"/>
    <property type="match status" value="1"/>
</dbReference>
<dbReference type="Gene3D" id="3.40.718.10">
    <property type="entry name" value="Isopropylmalate Dehydrogenase"/>
    <property type="match status" value="1"/>
</dbReference>
<dbReference type="InterPro" id="IPR004434">
    <property type="entry name" value="Isocitrate_DH_NAD"/>
</dbReference>
<dbReference type="InterPro" id="IPR024084">
    <property type="entry name" value="IsoPropMal-DH-like_dom"/>
</dbReference>
<dbReference type="NCBIfam" id="TIGR00175">
    <property type="entry name" value="mito_nad_idh"/>
    <property type="match status" value="1"/>
</dbReference>
<dbReference type="PANTHER" id="PTHR11835">
    <property type="entry name" value="DECARBOXYLATING DEHYDROGENASES-ISOCITRATE, ISOPROPYLMALATE, TARTRATE"/>
    <property type="match status" value="1"/>
</dbReference>
<dbReference type="PANTHER" id="PTHR11835:SF69">
    <property type="entry name" value="ISOCITRATE DEHYDROGENASE [NAD] REGULATORY SUBUNIT 2, MITOCHONDRIAL"/>
    <property type="match status" value="1"/>
</dbReference>
<dbReference type="Pfam" id="PF00180">
    <property type="entry name" value="Iso_dh"/>
    <property type="match status" value="1"/>
</dbReference>
<dbReference type="SMART" id="SM01329">
    <property type="entry name" value="Iso_dh"/>
    <property type="match status" value="1"/>
</dbReference>
<dbReference type="SUPFAM" id="SSF53659">
    <property type="entry name" value="Isocitrate/Isopropylmalate dehydrogenase-like"/>
    <property type="match status" value="1"/>
</dbReference>